<organism>
    <name type="scientific">Cereibacter sphaeroides (strain ATCC 17025 / ATH 2.4.3)</name>
    <name type="common">Rhodobacter sphaeroides</name>
    <dbReference type="NCBI Taxonomy" id="349102"/>
    <lineage>
        <taxon>Bacteria</taxon>
        <taxon>Pseudomonadati</taxon>
        <taxon>Pseudomonadota</taxon>
        <taxon>Alphaproteobacteria</taxon>
        <taxon>Rhodobacterales</taxon>
        <taxon>Paracoccaceae</taxon>
        <taxon>Cereibacter</taxon>
    </lineage>
</organism>
<evidence type="ECO:0000255" key="1">
    <source>
        <dbReference type="HAMAP-Rule" id="MF_00074"/>
    </source>
</evidence>
<gene>
    <name evidence="1" type="primary">rsmG</name>
    <name type="ordered locus">Rsph17025_2665</name>
</gene>
<sequence length="208" mass="22513">MTEDDCKVAEALNVSRETLGKLEQYADLVRKWNSAINLIGRSTEGQIWIRHIQDSAQLWGLRAAPFGTWLDLGSGGGLPGIVLATIATEKAPESRFVLVESDQRKATFLRTAARTLCLNVTVHAARVEQLPPQRADVISARALAPLTDLCALAAPHLAPEGMCLFPKGANYASEIAAARLSWNMEPEIHPSVTDPSAVILKLKAMAHV</sequence>
<accession>A4WVY8</accession>
<dbReference type="EC" id="2.1.1.170" evidence="1"/>
<dbReference type="EMBL" id="CP000661">
    <property type="protein sequence ID" value="ABP71552.1"/>
    <property type="molecule type" value="Genomic_DNA"/>
</dbReference>
<dbReference type="SMR" id="A4WVY8"/>
<dbReference type="STRING" id="349102.Rsph17025_2665"/>
<dbReference type="KEGG" id="rsq:Rsph17025_2665"/>
<dbReference type="eggNOG" id="COG0357">
    <property type="taxonomic scope" value="Bacteria"/>
</dbReference>
<dbReference type="HOGENOM" id="CLU_065341_1_1_5"/>
<dbReference type="BioCyc" id="RSPH349102:G1G8M-2745-MONOMER"/>
<dbReference type="GO" id="GO:0005829">
    <property type="term" value="C:cytosol"/>
    <property type="evidence" value="ECO:0007669"/>
    <property type="project" value="TreeGrafter"/>
</dbReference>
<dbReference type="GO" id="GO:0070043">
    <property type="term" value="F:rRNA (guanine-N7-)-methyltransferase activity"/>
    <property type="evidence" value="ECO:0007669"/>
    <property type="project" value="UniProtKB-UniRule"/>
</dbReference>
<dbReference type="Gene3D" id="3.40.50.150">
    <property type="entry name" value="Vaccinia Virus protein VP39"/>
    <property type="match status" value="1"/>
</dbReference>
<dbReference type="HAMAP" id="MF_00074">
    <property type="entry name" value="16SrRNA_methyltr_G"/>
    <property type="match status" value="1"/>
</dbReference>
<dbReference type="InterPro" id="IPR003682">
    <property type="entry name" value="rRNA_ssu_MeTfrase_G"/>
</dbReference>
<dbReference type="InterPro" id="IPR029063">
    <property type="entry name" value="SAM-dependent_MTases_sf"/>
</dbReference>
<dbReference type="NCBIfam" id="TIGR00138">
    <property type="entry name" value="rsmG_gidB"/>
    <property type="match status" value="1"/>
</dbReference>
<dbReference type="PANTHER" id="PTHR31760">
    <property type="entry name" value="S-ADENOSYL-L-METHIONINE-DEPENDENT METHYLTRANSFERASES SUPERFAMILY PROTEIN"/>
    <property type="match status" value="1"/>
</dbReference>
<dbReference type="PANTHER" id="PTHR31760:SF0">
    <property type="entry name" value="S-ADENOSYL-L-METHIONINE-DEPENDENT METHYLTRANSFERASES SUPERFAMILY PROTEIN"/>
    <property type="match status" value="1"/>
</dbReference>
<dbReference type="Pfam" id="PF02527">
    <property type="entry name" value="GidB"/>
    <property type="match status" value="1"/>
</dbReference>
<dbReference type="PIRSF" id="PIRSF003078">
    <property type="entry name" value="GidB"/>
    <property type="match status" value="1"/>
</dbReference>
<dbReference type="SUPFAM" id="SSF53335">
    <property type="entry name" value="S-adenosyl-L-methionine-dependent methyltransferases"/>
    <property type="match status" value="1"/>
</dbReference>
<name>RSMG_CERS5</name>
<keyword id="KW-0963">Cytoplasm</keyword>
<keyword id="KW-0489">Methyltransferase</keyword>
<keyword id="KW-0698">rRNA processing</keyword>
<keyword id="KW-0949">S-adenosyl-L-methionine</keyword>
<keyword id="KW-0808">Transferase</keyword>
<feature type="chain" id="PRO_0000335411" description="Ribosomal RNA small subunit methyltransferase G">
    <location>
        <begin position="1"/>
        <end position="208"/>
    </location>
</feature>
<feature type="binding site" evidence="1">
    <location>
        <position position="73"/>
    </location>
    <ligand>
        <name>S-adenosyl-L-methionine</name>
        <dbReference type="ChEBI" id="CHEBI:59789"/>
    </ligand>
</feature>
<feature type="binding site" evidence="1">
    <location>
        <position position="78"/>
    </location>
    <ligand>
        <name>S-adenosyl-L-methionine</name>
        <dbReference type="ChEBI" id="CHEBI:59789"/>
    </ligand>
</feature>
<feature type="binding site" evidence="1">
    <location>
        <begin position="127"/>
        <end position="128"/>
    </location>
    <ligand>
        <name>S-adenosyl-L-methionine</name>
        <dbReference type="ChEBI" id="CHEBI:59789"/>
    </ligand>
</feature>
<feature type="binding site" evidence="1">
    <location>
        <position position="141"/>
    </location>
    <ligand>
        <name>S-adenosyl-L-methionine</name>
        <dbReference type="ChEBI" id="CHEBI:59789"/>
    </ligand>
</feature>
<protein>
    <recommendedName>
        <fullName evidence="1">Ribosomal RNA small subunit methyltransferase G</fullName>
        <ecNumber evidence="1">2.1.1.170</ecNumber>
    </recommendedName>
    <alternativeName>
        <fullName evidence="1">16S rRNA 7-methylguanosine methyltransferase</fullName>
        <shortName evidence="1">16S rRNA m7G methyltransferase</shortName>
    </alternativeName>
</protein>
<proteinExistence type="inferred from homology"/>
<comment type="function">
    <text evidence="1">Specifically methylates the N7 position of guanine in position 527 of 16S rRNA.</text>
</comment>
<comment type="catalytic activity">
    <reaction evidence="1">
        <text>guanosine(527) in 16S rRNA + S-adenosyl-L-methionine = N(7)-methylguanosine(527) in 16S rRNA + S-adenosyl-L-homocysteine</text>
        <dbReference type="Rhea" id="RHEA:42732"/>
        <dbReference type="Rhea" id="RHEA-COMP:10209"/>
        <dbReference type="Rhea" id="RHEA-COMP:10210"/>
        <dbReference type="ChEBI" id="CHEBI:57856"/>
        <dbReference type="ChEBI" id="CHEBI:59789"/>
        <dbReference type="ChEBI" id="CHEBI:74269"/>
        <dbReference type="ChEBI" id="CHEBI:74480"/>
        <dbReference type="EC" id="2.1.1.170"/>
    </reaction>
</comment>
<comment type="subcellular location">
    <subcellularLocation>
        <location evidence="1">Cytoplasm</location>
    </subcellularLocation>
</comment>
<comment type="similarity">
    <text evidence="1">Belongs to the methyltransferase superfamily. RNA methyltransferase RsmG family.</text>
</comment>
<reference key="1">
    <citation type="submission" date="2007-04" db="EMBL/GenBank/DDBJ databases">
        <title>Complete sequence of chromosome of Rhodobacter sphaeroides ATCC 17025.</title>
        <authorList>
            <consortium name="US DOE Joint Genome Institute"/>
            <person name="Copeland A."/>
            <person name="Lucas S."/>
            <person name="Lapidus A."/>
            <person name="Barry K."/>
            <person name="Detter J.C."/>
            <person name="Glavina del Rio T."/>
            <person name="Hammon N."/>
            <person name="Israni S."/>
            <person name="Dalin E."/>
            <person name="Tice H."/>
            <person name="Pitluck S."/>
            <person name="Chertkov O."/>
            <person name="Brettin T."/>
            <person name="Bruce D."/>
            <person name="Han C."/>
            <person name="Schmutz J."/>
            <person name="Larimer F."/>
            <person name="Land M."/>
            <person name="Hauser L."/>
            <person name="Kyrpides N."/>
            <person name="Kim E."/>
            <person name="Richardson P."/>
            <person name="Mackenzie C."/>
            <person name="Choudhary M."/>
            <person name="Donohue T.J."/>
            <person name="Kaplan S."/>
        </authorList>
    </citation>
    <scope>NUCLEOTIDE SEQUENCE [LARGE SCALE GENOMIC DNA]</scope>
    <source>
        <strain>ATCC 17025 / ATH 2.4.3</strain>
    </source>
</reference>